<accession>Q9CPQ5</accession>
<accession>Q8C2G4</accession>
<accession>Q8VEF8</accession>
<accession>Q9CX70</accession>
<dbReference type="EMBL" id="AK011998">
    <property type="protein sequence ID" value="BAB27968.1"/>
    <property type="status" value="ALT_INIT"/>
    <property type="molecule type" value="mRNA"/>
</dbReference>
<dbReference type="EMBL" id="AK012179">
    <property type="protein sequence ID" value="BAB28080.1"/>
    <property type="status" value="ALT_INIT"/>
    <property type="molecule type" value="mRNA"/>
</dbReference>
<dbReference type="EMBL" id="AK020040">
    <property type="protein sequence ID" value="BAB31976.1"/>
    <property type="status" value="ALT_SEQ"/>
    <property type="molecule type" value="mRNA"/>
</dbReference>
<dbReference type="EMBL" id="AK076094">
    <property type="protein sequence ID" value="BAC36178.1"/>
    <property type="status" value="ALT_INIT"/>
    <property type="molecule type" value="mRNA"/>
</dbReference>
<dbReference type="EMBL" id="AK088680">
    <property type="protein sequence ID" value="BAC40501.1"/>
    <property type="status" value="ALT_INIT"/>
    <property type="molecule type" value="mRNA"/>
</dbReference>
<dbReference type="EMBL" id="BC018524">
    <property type="protein sequence ID" value="AAH18524.1"/>
    <property type="molecule type" value="mRNA"/>
</dbReference>
<dbReference type="CCDS" id="CCDS28789.1">
    <molecule id="Q9CPQ5-1"/>
</dbReference>
<dbReference type="RefSeq" id="NP_114069.2">
    <molecule id="Q9CPQ5-1"/>
    <property type="nucleotide sequence ID" value="NM_031863.4"/>
</dbReference>
<dbReference type="SMR" id="Q9CPQ5"/>
<dbReference type="BioGRID" id="219980">
    <property type="interactions" value="14"/>
</dbReference>
<dbReference type="ComplexPortal" id="CPX-5704">
    <property type="entry name" value="Kinetochore CCAN complex"/>
</dbReference>
<dbReference type="CORUM" id="Q9CPQ5"/>
<dbReference type="FunCoup" id="Q9CPQ5">
    <property type="interactions" value="2542"/>
</dbReference>
<dbReference type="IntAct" id="Q9CPQ5">
    <property type="interactions" value="9"/>
</dbReference>
<dbReference type="MINT" id="Q9CPQ5"/>
<dbReference type="STRING" id="10090.ENSMUSP00000084353"/>
<dbReference type="PhosphoSitePlus" id="Q9CPQ5"/>
<dbReference type="PaxDb" id="10090-ENSMUSP00000084353"/>
<dbReference type="PeptideAtlas" id="Q9CPQ5"/>
<dbReference type="ProteomicsDB" id="281188">
    <molecule id="Q9CPQ5-1"/>
</dbReference>
<dbReference type="ProteomicsDB" id="281189">
    <molecule id="Q9CPQ5-2"/>
</dbReference>
<dbReference type="Antibodypedia" id="30817">
    <property type="antibodies" value="144 antibodies from 24 providers"/>
</dbReference>
<dbReference type="DNASU" id="83815"/>
<dbReference type="Ensembl" id="ENSMUST00000087114.5">
    <molecule id="Q9CPQ5-1"/>
    <property type="protein sequence ID" value="ENSMUSP00000084353.5"/>
    <property type="gene ID" value="ENSMUSG00000023919.10"/>
</dbReference>
<dbReference type="GeneID" id="83815"/>
<dbReference type="KEGG" id="mmu:83815"/>
<dbReference type="UCSC" id="uc008con.1">
    <molecule id="Q9CPQ5-1"/>
    <property type="organism name" value="mouse"/>
</dbReference>
<dbReference type="AGR" id="MGI:1933744"/>
<dbReference type="CTD" id="55166"/>
<dbReference type="MGI" id="MGI:1933744">
    <property type="gene designation" value="Cenpq"/>
</dbReference>
<dbReference type="VEuPathDB" id="HostDB:ENSMUSG00000023919"/>
<dbReference type="eggNOG" id="ENOG502S34R">
    <property type="taxonomic scope" value="Eukaryota"/>
</dbReference>
<dbReference type="GeneTree" id="ENSGT00390000005599"/>
<dbReference type="HOGENOM" id="CLU_085740_0_0_1"/>
<dbReference type="InParanoid" id="Q9CPQ5"/>
<dbReference type="OMA" id="LESKIHW"/>
<dbReference type="OrthoDB" id="8927710at2759"/>
<dbReference type="TreeFam" id="TF336238"/>
<dbReference type="Reactome" id="R-MMU-141444">
    <property type="pathway name" value="Amplification of signal from unattached kinetochores via a MAD2 inhibitory signal"/>
</dbReference>
<dbReference type="Reactome" id="R-MMU-2467813">
    <property type="pathway name" value="Separation of Sister Chromatids"/>
</dbReference>
<dbReference type="Reactome" id="R-MMU-2500257">
    <property type="pathway name" value="Resolution of Sister Chromatid Cohesion"/>
</dbReference>
<dbReference type="Reactome" id="R-MMU-5663220">
    <property type="pathway name" value="RHO GTPases Activate Formins"/>
</dbReference>
<dbReference type="Reactome" id="R-MMU-606279">
    <property type="pathway name" value="Deposition of new CENPA-containing nucleosomes at the centromere"/>
</dbReference>
<dbReference type="Reactome" id="R-MMU-68877">
    <property type="pathway name" value="Mitotic Prometaphase"/>
</dbReference>
<dbReference type="Reactome" id="R-MMU-9648025">
    <property type="pathway name" value="EML4 and NUDC in mitotic spindle formation"/>
</dbReference>
<dbReference type="BioGRID-ORCS" id="83815">
    <property type="hits" value="8 hits in 77 CRISPR screens"/>
</dbReference>
<dbReference type="ChiTaRS" id="Cenpq">
    <property type="organism name" value="mouse"/>
</dbReference>
<dbReference type="PRO" id="PR:Q9CPQ5"/>
<dbReference type="Proteomes" id="UP000000589">
    <property type="component" value="Chromosome 17"/>
</dbReference>
<dbReference type="RNAct" id="Q9CPQ5">
    <property type="molecule type" value="protein"/>
</dbReference>
<dbReference type="Bgee" id="ENSMUSG00000023919">
    <property type="expression patterns" value="Expressed in primary oocyte and 231 other cell types or tissues"/>
</dbReference>
<dbReference type="ExpressionAtlas" id="Q9CPQ5">
    <property type="expression patterns" value="baseline and differential"/>
</dbReference>
<dbReference type="GO" id="GO:0015629">
    <property type="term" value="C:actin cytoskeleton"/>
    <property type="evidence" value="ECO:0007669"/>
    <property type="project" value="Ensembl"/>
</dbReference>
<dbReference type="GO" id="GO:0000939">
    <property type="term" value="C:inner kinetochore"/>
    <property type="evidence" value="ECO:0000266"/>
    <property type="project" value="ComplexPortal"/>
</dbReference>
<dbReference type="GO" id="GO:0005654">
    <property type="term" value="C:nucleoplasm"/>
    <property type="evidence" value="ECO:0007669"/>
    <property type="project" value="Ensembl"/>
</dbReference>
<dbReference type="GO" id="GO:0005634">
    <property type="term" value="C:nucleus"/>
    <property type="evidence" value="ECO:0000303"/>
    <property type="project" value="ComplexPortal"/>
</dbReference>
<dbReference type="GO" id="GO:0007059">
    <property type="term" value="P:chromosome segregation"/>
    <property type="evidence" value="ECO:0000303"/>
    <property type="project" value="ComplexPortal"/>
</dbReference>
<dbReference type="GO" id="GO:0051310">
    <property type="term" value="P:metaphase chromosome alignment"/>
    <property type="evidence" value="ECO:0000250"/>
    <property type="project" value="UniProtKB"/>
</dbReference>
<dbReference type="GO" id="GO:1905342">
    <property type="term" value="P:positive regulation of protein localization to kinetochore"/>
    <property type="evidence" value="ECO:0000250"/>
    <property type="project" value="UniProtKB"/>
</dbReference>
<dbReference type="InterPro" id="IPR025212">
    <property type="entry name" value="CAD_CENP-Q"/>
</dbReference>
<dbReference type="PANTHER" id="PTHR31345">
    <property type="entry name" value="CENTROMERE PROTEIN Q"/>
    <property type="match status" value="1"/>
</dbReference>
<dbReference type="PANTHER" id="PTHR31345:SF3">
    <property type="entry name" value="CENTROMERE PROTEIN Q"/>
    <property type="match status" value="1"/>
</dbReference>
<dbReference type="Pfam" id="PF13094">
    <property type="entry name" value="CENP-Q"/>
    <property type="match status" value="1"/>
</dbReference>
<reference key="1">
    <citation type="journal article" date="2005" name="Science">
        <title>The transcriptional landscape of the mammalian genome.</title>
        <authorList>
            <person name="Carninci P."/>
            <person name="Kasukawa T."/>
            <person name="Katayama S."/>
            <person name="Gough J."/>
            <person name="Frith M.C."/>
            <person name="Maeda N."/>
            <person name="Oyama R."/>
            <person name="Ravasi T."/>
            <person name="Lenhard B."/>
            <person name="Wells C."/>
            <person name="Kodzius R."/>
            <person name="Shimokawa K."/>
            <person name="Bajic V.B."/>
            <person name="Brenner S.E."/>
            <person name="Batalov S."/>
            <person name="Forrest A.R."/>
            <person name="Zavolan M."/>
            <person name="Davis M.J."/>
            <person name="Wilming L.G."/>
            <person name="Aidinis V."/>
            <person name="Allen J.E."/>
            <person name="Ambesi-Impiombato A."/>
            <person name="Apweiler R."/>
            <person name="Aturaliya R.N."/>
            <person name="Bailey T.L."/>
            <person name="Bansal M."/>
            <person name="Baxter L."/>
            <person name="Beisel K.W."/>
            <person name="Bersano T."/>
            <person name="Bono H."/>
            <person name="Chalk A.M."/>
            <person name="Chiu K.P."/>
            <person name="Choudhary V."/>
            <person name="Christoffels A."/>
            <person name="Clutterbuck D.R."/>
            <person name="Crowe M.L."/>
            <person name="Dalla E."/>
            <person name="Dalrymple B.P."/>
            <person name="de Bono B."/>
            <person name="Della Gatta G."/>
            <person name="di Bernardo D."/>
            <person name="Down T."/>
            <person name="Engstrom P."/>
            <person name="Fagiolini M."/>
            <person name="Faulkner G."/>
            <person name="Fletcher C.F."/>
            <person name="Fukushima T."/>
            <person name="Furuno M."/>
            <person name="Futaki S."/>
            <person name="Gariboldi M."/>
            <person name="Georgii-Hemming P."/>
            <person name="Gingeras T.R."/>
            <person name="Gojobori T."/>
            <person name="Green R.E."/>
            <person name="Gustincich S."/>
            <person name="Harbers M."/>
            <person name="Hayashi Y."/>
            <person name="Hensch T.K."/>
            <person name="Hirokawa N."/>
            <person name="Hill D."/>
            <person name="Huminiecki L."/>
            <person name="Iacono M."/>
            <person name="Ikeo K."/>
            <person name="Iwama A."/>
            <person name="Ishikawa T."/>
            <person name="Jakt M."/>
            <person name="Kanapin A."/>
            <person name="Katoh M."/>
            <person name="Kawasawa Y."/>
            <person name="Kelso J."/>
            <person name="Kitamura H."/>
            <person name="Kitano H."/>
            <person name="Kollias G."/>
            <person name="Krishnan S.P."/>
            <person name="Kruger A."/>
            <person name="Kummerfeld S.K."/>
            <person name="Kurochkin I.V."/>
            <person name="Lareau L.F."/>
            <person name="Lazarevic D."/>
            <person name="Lipovich L."/>
            <person name="Liu J."/>
            <person name="Liuni S."/>
            <person name="McWilliam S."/>
            <person name="Madan Babu M."/>
            <person name="Madera M."/>
            <person name="Marchionni L."/>
            <person name="Matsuda H."/>
            <person name="Matsuzawa S."/>
            <person name="Miki H."/>
            <person name="Mignone F."/>
            <person name="Miyake S."/>
            <person name="Morris K."/>
            <person name="Mottagui-Tabar S."/>
            <person name="Mulder N."/>
            <person name="Nakano N."/>
            <person name="Nakauchi H."/>
            <person name="Ng P."/>
            <person name="Nilsson R."/>
            <person name="Nishiguchi S."/>
            <person name="Nishikawa S."/>
            <person name="Nori F."/>
            <person name="Ohara O."/>
            <person name="Okazaki Y."/>
            <person name="Orlando V."/>
            <person name="Pang K.C."/>
            <person name="Pavan W.J."/>
            <person name="Pavesi G."/>
            <person name="Pesole G."/>
            <person name="Petrovsky N."/>
            <person name="Piazza S."/>
            <person name="Reed J."/>
            <person name="Reid J.F."/>
            <person name="Ring B.Z."/>
            <person name="Ringwald M."/>
            <person name="Rost B."/>
            <person name="Ruan Y."/>
            <person name="Salzberg S.L."/>
            <person name="Sandelin A."/>
            <person name="Schneider C."/>
            <person name="Schoenbach C."/>
            <person name="Sekiguchi K."/>
            <person name="Semple C.A."/>
            <person name="Seno S."/>
            <person name="Sessa L."/>
            <person name="Sheng Y."/>
            <person name="Shibata Y."/>
            <person name="Shimada H."/>
            <person name="Shimada K."/>
            <person name="Silva D."/>
            <person name="Sinclair B."/>
            <person name="Sperling S."/>
            <person name="Stupka E."/>
            <person name="Sugiura K."/>
            <person name="Sultana R."/>
            <person name="Takenaka Y."/>
            <person name="Taki K."/>
            <person name="Tammoja K."/>
            <person name="Tan S.L."/>
            <person name="Tang S."/>
            <person name="Taylor M.S."/>
            <person name="Tegner J."/>
            <person name="Teichmann S.A."/>
            <person name="Ueda H.R."/>
            <person name="van Nimwegen E."/>
            <person name="Verardo R."/>
            <person name="Wei C.L."/>
            <person name="Yagi K."/>
            <person name="Yamanishi H."/>
            <person name="Zabarovsky E."/>
            <person name="Zhu S."/>
            <person name="Zimmer A."/>
            <person name="Hide W."/>
            <person name="Bult C."/>
            <person name="Grimmond S.M."/>
            <person name="Teasdale R.D."/>
            <person name="Liu E.T."/>
            <person name="Brusic V."/>
            <person name="Quackenbush J."/>
            <person name="Wahlestedt C."/>
            <person name="Mattick J.S."/>
            <person name="Hume D.A."/>
            <person name="Kai C."/>
            <person name="Sasaki D."/>
            <person name="Tomaru Y."/>
            <person name="Fukuda S."/>
            <person name="Kanamori-Katayama M."/>
            <person name="Suzuki M."/>
            <person name="Aoki J."/>
            <person name="Arakawa T."/>
            <person name="Iida J."/>
            <person name="Imamura K."/>
            <person name="Itoh M."/>
            <person name="Kato T."/>
            <person name="Kawaji H."/>
            <person name="Kawagashira N."/>
            <person name="Kawashima T."/>
            <person name="Kojima M."/>
            <person name="Kondo S."/>
            <person name="Konno H."/>
            <person name="Nakano K."/>
            <person name="Ninomiya N."/>
            <person name="Nishio T."/>
            <person name="Okada M."/>
            <person name="Plessy C."/>
            <person name="Shibata K."/>
            <person name="Shiraki T."/>
            <person name="Suzuki S."/>
            <person name="Tagami M."/>
            <person name="Waki K."/>
            <person name="Watahiki A."/>
            <person name="Okamura-Oho Y."/>
            <person name="Suzuki H."/>
            <person name="Kawai J."/>
            <person name="Hayashizaki Y."/>
        </authorList>
    </citation>
    <scope>NUCLEOTIDE SEQUENCE [LARGE SCALE MRNA] (ISOFORM 1)</scope>
    <source>
        <strain>C57BL/6J</strain>
        <strain>NOD</strain>
        <tissue>Embryo</tissue>
        <tissue>Forelimb</tissue>
        <tissue>Thymus</tissue>
    </source>
</reference>
<reference key="2">
    <citation type="journal article" date="2004" name="Genome Res.">
        <title>The status, quality, and expansion of the NIH full-length cDNA project: the Mammalian Gene Collection (MGC).</title>
        <authorList>
            <consortium name="The MGC Project Team"/>
        </authorList>
    </citation>
    <scope>NUCLEOTIDE SEQUENCE [LARGE SCALE MRNA] (ISOFORMS 1 AND 2)</scope>
    <source>
        <strain>Czech II</strain>
        <tissue>Mammary gland</tissue>
    </source>
</reference>
<protein>
    <recommendedName>
        <fullName>Centromere protein Q</fullName>
        <shortName>CENP-Q</shortName>
    </recommendedName>
</protein>
<evidence type="ECO:0000250" key="1">
    <source>
        <dbReference type="UniProtKB" id="Q7L2Z9"/>
    </source>
</evidence>
<evidence type="ECO:0000255" key="2"/>
<evidence type="ECO:0000256" key="3">
    <source>
        <dbReference type="SAM" id="MobiDB-lite"/>
    </source>
</evidence>
<evidence type="ECO:0000303" key="4">
    <source>
    </source>
</evidence>
<evidence type="ECO:0000305" key="5"/>
<sequence>MSGKARASRKKPQQVKRSLKQRANKEADLPENEVGNTAKRNRSHAKHLSSKVTGQATYVHLKRVKISSSKRTTWQPLPKDTEEYLQSMMESVILGILFNIKRKEEIQCHLNQLKKRLLQQCATLKVPPRKLNYLKDVSKMLKMEKAQERANEESLASLQEEIDKIVETTESMTESIQSLKNKIQILTSEVEEEEQEVKQVFHIDSNKVLALPELSQKSLKAPILQEEILALIPNQNALLKDLDVLHDSAPVKNVSAFIEEAYKKLDS</sequence>
<proteinExistence type="evidence at transcript level"/>
<keyword id="KW-0025">Alternative splicing</keyword>
<keyword id="KW-0137">Centromere</keyword>
<keyword id="KW-0158">Chromosome</keyword>
<keyword id="KW-0175">Coiled coil</keyword>
<keyword id="KW-0539">Nucleus</keyword>
<keyword id="KW-0597">Phosphoprotein</keyword>
<keyword id="KW-1185">Reference proteome</keyword>
<name>CENPQ_MOUSE</name>
<gene>
    <name type="primary">Cenpq</name>
</gene>
<comment type="function">
    <text evidence="1">Component of the CENPA-CAD (nucleosome distal) complex, a complex recruited to centromeres which is involved in assembly of kinetochore proteins, mitotic progression and chromosome segregation. May be involved in incorporation of newly synthesized CENPA into centromeres via its interaction with the CENPA-NAC complex. Plays an important role in chromosome congression and in the recruitment of CENP-O complex (which comprises CENPO, CENPP, CENPQ and CENPU), CENPE and PLK1 to the kinetochores.</text>
</comment>
<comment type="subunit">
    <text evidence="1">Component of the CENPA-CAD complex, composed of CENPI, CENPK, CENPL, CENPO, CENPP, CENPQ, CENPR and CENPS. The CENPA-CAD complex interacts with the CENPA-NAC complex, at least composed of CENPA, CENPC, CENPH, CENPM, CENPN, CENPT and CENPU.</text>
</comment>
<comment type="subcellular location">
    <subcellularLocation>
        <location evidence="1">Nucleus</location>
    </subcellularLocation>
    <subcellularLocation>
        <location evidence="1">Chromosome</location>
        <location evidence="1">Centromere</location>
    </subcellularLocation>
    <text evidence="1">Localizes exclusively in the centromeres. The CENPA-CAD complex is probably recruited on centromeres by the CENPA-NAC complex.</text>
</comment>
<comment type="alternative products">
    <event type="alternative splicing"/>
    <isoform>
        <id>Q9CPQ5-1</id>
        <name>1</name>
        <sequence type="displayed"/>
    </isoform>
    <isoform>
        <id>Q9CPQ5-2</id>
        <name>2</name>
        <sequence type="described" ref="VSP_020451 VSP_020452"/>
    </isoform>
</comment>
<comment type="PTM">
    <text evidence="1">Phosphorylation at Ser-49 is essential for CENPE recruitment to kinetochores and orderly chromosome congression.</text>
</comment>
<comment type="similarity">
    <text evidence="5">Belongs to the CENP-Q/OKP1 family.</text>
</comment>
<comment type="sequence caution" evidence="5">
    <conflict type="erroneous initiation">
        <sequence resource="EMBL-CDS" id="BAB27968"/>
    </conflict>
    <text>Extended N-terminus.</text>
</comment>
<comment type="sequence caution" evidence="5">
    <conflict type="erroneous initiation">
        <sequence resource="EMBL-CDS" id="BAB28080"/>
    </conflict>
    <text>Extended N-terminus.</text>
</comment>
<comment type="sequence caution" evidence="5">
    <conflict type="erroneous initiation">
        <sequence resource="EMBL-CDS" id="BAB31976"/>
    </conflict>
    <text>Extended N-terminus.</text>
</comment>
<comment type="sequence caution" evidence="5">
    <conflict type="frameshift">
        <sequence resource="EMBL-CDS" id="BAB31976"/>
    </conflict>
</comment>
<comment type="sequence caution" evidence="5">
    <conflict type="erroneous initiation">
        <sequence resource="EMBL-CDS" id="BAC36178"/>
    </conflict>
    <text>Extended N-terminus.</text>
</comment>
<comment type="sequence caution" evidence="5">
    <conflict type="erroneous initiation">
        <sequence resource="EMBL-CDS" id="BAC40501"/>
    </conflict>
    <text>Extended N-terminus.</text>
</comment>
<feature type="chain" id="PRO_0000089535" description="Centromere protein Q">
    <location>
        <begin position="1"/>
        <end position="267"/>
    </location>
</feature>
<feature type="region of interest" description="Disordered" evidence="3">
    <location>
        <begin position="1"/>
        <end position="54"/>
    </location>
</feature>
<feature type="coiled-coil region" evidence="2">
    <location>
        <begin position="100"/>
        <end position="202"/>
    </location>
</feature>
<feature type="compositionally biased region" description="Basic residues" evidence="3">
    <location>
        <begin position="1"/>
        <end position="22"/>
    </location>
</feature>
<feature type="compositionally biased region" description="Basic residues" evidence="3">
    <location>
        <begin position="39"/>
        <end position="49"/>
    </location>
</feature>
<feature type="modified residue" description="Phosphoserine" evidence="1">
    <location>
        <position position="49"/>
    </location>
</feature>
<feature type="splice variant" id="VSP_020451" description="In isoform 2." evidence="4">
    <original>LQQCATLKV</original>
    <variation>CIVVIILFR</variation>
    <location>
        <begin position="118"/>
        <end position="126"/>
    </location>
</feature>
<feature type="splice variant" id="VSP_020452" description="In isoform 2." evidence="4">
    <location>
        <begin position="127"/>
        <end position="267"/>
    </location>
</feature>
<feature type="sequence conflict" description="In Ref. 2; AAH18524." evidence="5" ref="2">
    <original>S</original>
    <variation>EIA</variation>
    <location>
        <position position="2"/>
    </location>
</feature>
<feature type="sequence conflict" description="In Ref. 2; AAH18524." evidence="5" ref="2">
    <original>E</original>
    <variation>Q</variation>
    <location>
        <position position="105"/>
    </location>
</feature>
<feature type="sequence conflict" description="In Ref. 1; BAB31976." evidence="5" ref="1">
    <original>Q</original>
    <variation>P</variation>
    <location>
        <position position="159"/>
    </location>
</feature>
<feature type="sequence conflict" description="In Ref. 1; BAB31976." evidence="5" ref="1">
    <original>D</original>
    <variation>A</variation>
    <location>
        <position position="163"/>
    </location>
</feature>
<feature type="sequence conflict" description="In Ref. 1; BAB31976." evidence="5" ref="1">
    <original>TT</original>
    <variation>AP</variation>
    <location>
        <begin position="168"/>
        <end position="169"/>
    </location>
</feature>
<feature type="sequence conflict" description="In Ref. 1; BAB31976." evidence="5" ref="1">
    <original>L</original>
    <variation>V</variation>
    <location>
        <position position="179"/>
    </location>
</feature>
<feature type="sequence conflict" description="In Ref. 1; BAB31976." evidence="5" ref="1">
    <original>T</original>
    <variation>A</variation>
    <location>
        <position position="187"/>
    </location>
</feature>
<feature type="sequence conflict" description="In Ref. 1; BAB31976." evidence="5" ref="1">
    <original>L</original>
    <variation>F</variation>
    <location>
        <position position="219"/>
    </location>
</feature>
<organism>
    <name type="scientific">Mus musculus</name>
    <name type="common">Mouse</name>
    <dbReference type="NCBI Taxonomy" id="10090"/>
    <lineage>
        <taxon>Eukaryota</taxon>
        <taxon>Metazoa</taxon>
        <taxon>Chordata</taxon>
        <taxon>Craniata</taxon>
        <taxon>Vertebrata</taxon>
        <taxon>Euteleostomi</taxon>
        <taxon>Mammalia</taxon>
        <taxon>Eutheria</taxon>
        <taxon>Euarchontoglires</taxon>
        <taxon>Glires</taxon>
        <taxon>Rodentia</taxon>
        <taxon>Myomorpha</taxon>
        <taxon>Muroidea</taxon>
        <taxon>Muridae</taxon>
        <taxon>Murinae</taxon>
        <taxon>Mus</taxon>
        <taxon>Mus</taxon>
    </lineage>
</organism>